<evidence type="ECO:0000255" key="1">
    <source>
        <dbReference type="PROSITE-ProRule" id="PRU01066"/>
    </source>
</evidence>
<evidence type="ECO:0000305" key="2"/>
<evidence type="ECO:0000312" key="3">
    <source>
        <dbReference type="EMBL" id="BAA98641.1"/>
    </source>
</evidence>
<feature type="chain" id="PRO_0000166213" description="Glycine cleavage system H-like protein">
    <location>
        <begin position="1"/>
        <end position="115"/>
    </location>
</feature>
<feature type="domain" description="Lipoyl-binding" evidence="1">
    <location>
        <begin position="17"/>
        <end position="99"/>
    </location>
</feature>
<feature type="modified residue" description="N6-lipoyllysine" evidence="1">
    <location>
        <position position="58"/>
    </location>
</feature>
<keyword id="KW-0450">Lipoyl</keyword>
<gene>
    <name evidence="3" type="primary">gcsH</name>
    <name type="ordered locus">CPn_0433</name>
    <name type="ordered locus">CP_0320</name>
    <name type="ordered locus">CpB0449</name>
</gene>
<comment type="cofactor">
    <cofactor evidence="1">
        <name>(R)-lipoate</name>
        <dbReference type="ChEBI" id="CHEBI:83088"/>
    </cofactor>
    <text evidence="1">Binds 1 lipoyl cofactor covalently.</text>
</comment>
<comment type="similarity">
    <text evidence="2">Belongs to the GcvH family.</text>
</comment>
<comment type="sequence caution" evidence="2">
    <conflict type="erroneous initiation">
        <sequence resource="EMBL-CDS" id="AAP98380"/>
    </conflict>
</comment>
<organism>
    <name type="scientific">Chlamydia pneumoniae</name>
    <name type="common">Chlamydophila pneumoniae</name>
    <dbReference type="NCBI Taxonomy" id="83558"/>
    <lineage>
        <taxon>Bacteria</taxon>
        <taxon>Pseudomonadati</taxon>
        <taxon>Chlamydiota</taxon>
        <taxon>Chlamydiia</taxon>
        <taxon>Chlamydiales</taxon>
        <taxon>Chlamydiaceae</taxon>
        <taxon>Chlamydia/Chlamydophila group</taxon>
        <taxon>Chlamydia</taxon>
    </lineage>
</organism>
<accession>Q9Z8B0</accession>
<dbReference type="EMBL" id="AE001363">
    <property type="protein sequence ID" value="AAD18577.1"/>
    <property type="molecule type" value="Genomic_DNA"/>
</dbReference>
<dbReference type="EMBL" id="AE002161">
    <property type="protein sequence ID" value="AAF38175.1"/>
    <property type="molecule type" value="Genomic_DNA"/>
</dbReference>
<dbReference type="EMBL" id="BA000008">
    <property type="protein sequence ID" value="BAA98641.1"/>
    <property type="molecule type" value="Genomic_DNA"/>
</dbReference>
<dbReference type="EMBL" id="AE009440">
    <property type="protein sequence ID" value="AAP98380.1"/>
    <property type="status" value="ALT_INIT"/>
    <property type="molecule type" value="Genomic_DNA"/>
</dbReference>
<dbReference type="PIR" id="C72079">
    <property type="entry name" value="C72079"/>
</dbReference>
<dbReference type="PIR" id="G86544">
    <property type="entry name" value="G86544"/>
</dbReference>
<dbReference type="RefSeq" id="NP_224633.1">
    <property type="nucleotide sequence ID" value="NC_000922.1"/>
</dbReference>
<dbReference type="RefSeq" id="WP_010883076.1">
    <property type="nucleotide sequence ID" value="NZ_LN847257.1"/>
</dbReference>
<dbReference type="SMR" id="Q9Z8B0"/>
<dbReference type="STRING" id="406984.CPK_ORF00945"/>
<dbReference type="GeneID" id="45050480"/>
<dbReference type="KEGG" id="cpa:CP_0320"/>
<dbReference type="KEGG" id="cpj:gcsH"/>
<dbReference type="KEGG" id="cpn:CPn_0433"/>
<dbReference type="KEGG" id="cpt:CpB0449"/>
<dbReference type="PATRIC" id="fig|115713.3.peg.480"/>
<dbReference type="eggNOG" id="COG0509">
    <property type="taxonomic scope" value="Bacteria"/>
</dbReference>
<dbReference type="HOGENOM" id="CLU_097408_2_4_0"/>
<dbReference type="OMA" id="EHEWLSG"/>
<dbReference type="OrthoDB" id="9796712at2"/>
<dbReference type="Proteomes" id="UP000000583">
    <property type="component" value="Chromosome"/>
</dbReference>
<dbReference type="Proteomes" id="UP000000801">
    <property type="component" value="Chromosome"/>
</dbReference>
<dbReference type="GO" id="GO:0005829">
    <property type="term" value="C:cytosol"/>
    <property type="evidence" value="ECO:0007669"/>
    <property type="project" value="TreeGrafter"/>
</dbReference>
<dbReference type="GO" id="GO:0005960">
    <property type="term" value="C:glycine cleavage complex"/>
    <property type="evidence" value="ECO:0007669"/>
    <property type="project" value="InterPro"/>
</dbReference>
<dbReference type="GO" id="GO:0019464">
    <property type="term" value="P:glycine decarboxylation via glycine cleavage system"/>
    <property type="evidence" value="ECO:0007669"/>
    <property type="project" value="InterPro"/>
</dbReference>
<dbReference type="CDD" id="cd06848">
    <property type="entry name" value="GCS_H"/>
    <property type="match status" value="1"/>
</dbReference>
<dbReference type="Gene3D" id="2.40.50.100">
    <property type="match status" value="1"/>
</dbReference>
<dbReference type="InterPro" id="IPR000089">
    <property type="entry name" value="Biotin_lipoyl"/>
</dbReference>
<dbReference type="InterPro" id="IPR002930">
    <property type="entry name" value="GCV_H"/>
</dbReference>
<dbReference type="InterPro" id="IPR033753">
    <property type="entry name" value="GCV_H/Fam206"/>
</dbReference>
<dbReference type="InterPro" id="IPR017514">
    <property type="entry name" value="GcvH_Chlamydia"/>
</dbReference>
<dbReference type="InterPro" id="IPR011053">
    <property type="entry name" value="Single_hybrid_motif"/>
</dbReference>
<dbReference type="NCBIfam" id="TIGR03077">
    <property type="entry name" value="not_gcvH"/>
    <property type="match status" value="1"/>
</dbReference>
<dbReference type="PANTHER" id="PTHR11715">
    <property type="entry name" value="GLYCINE CLEAVAGE SYSTEM H PROTEIN"/>
    <property type="match status" value="1"/>
</dbReference>
<dbReference type="PANTHER" id="PTHR11715:SF3">
    <property type="entry name" value="GLYCINE CLEAVAGE SYSTEM H PROTEIN-RELATED"/>
    <property type="match status" value="1"/>
</dbReference>
<dbReference type="Pfam" id="PF01597">
    <property type="entry name" value="GCV_H"/>
    <property type="match status" value="1"/>
</dbReference>
<dbReference type="SUPFAM" id="SSF51230">
    <property type="entry name" value="Single hybrid motif"/>
    <property type="match status" value="1"/>
</dbReference>
<dbReference type="PROSITE" id="PS50968">
    <property type="entry name" value="BIOTINYL_LIPOYL"/>
    <property type="match status" value="1"/>
</dbReference>
<name>GCSHL_CHLPN</name>
<proteinExistence type="inferred from homology"/>
<sequence length="115" mass="12876">MWYSDYHVWILPVHERVVRLGLTEKMQKNLGAILHVDLPSVGSLCKEGEVLVILESSKSAIEVLSPVSGEVIDINLDLVDNPQKINEAPEGEGWLAVVRLDQDWDPSNLSLMDEE</sequence>
<protein>
    <recommendedName>
        <fullName evidence="2">Glycine cleavage system H-like protein</fullName>
    </recommendedName>
</protein>
<reference key="1">
    <citation type="journal article" date="1999" name="Nat. Genet.">
        <title>Comparative genomes of Chlamydia pneumoniae and C. trachomatis.</title>
        <authorList>
            <person name="Kalman S."/>
            <person name="Mitchell W.P."/>
            <person name="Marathe R."/>
            <person name="Lammel C.J."/>
            <person name="Fan J."/>
            <person name="Hyman R.W."/>
            <person name="Olinger L."/>
            <person name="Grimwood J."/>
            <person name="Davis R.W."/>
            <person name="Stephens R.S."/>
        </authorList>
    </citation>
    <scope>NUCLEOTIDE SEQUENCE [LARGE SCALE GENOMIC DNA]</scope>
    <source>
        <strain>CWL029</strain>
    </source>
</reference>
<reference key="2">
    <citation type="journal article" date="2000" name="Nucleic Acids Res.">
        <title>Genome sequences of Chlamydia trachomatis MoPn and Chlamydia pneumoniae AR39.</title>
        <authorList>
            <person name="Read T.D."/>
            <person name="Brunham R.C."/>
            <person name="Shen C."/>
            <person name="Gill S.R."/>
            <person name="Heidelberg J.F."/>
            <person name="White O."/>
            <person name="Hickey E.K."/>
            <person name="Peterson J.D."/>
            <person name="Utterback T.R."/>
            <person name="Berry K.J."/>
            <person name="Bass S."/>
            <person name="Linher K.D."/>
            <person name="Weidman J.F."/>
            <person name="Khouri H.M."/>
            <person name="Craven B."/>
            <person name="Bowman C."/>
            <person name="Dodson R.J."/>
            <person name="Gwinn M.L."/>
            <person name="Nelson W.C."/>
            <person name="DeBoy R.T."/>
            <person name="Kolonay J.F."/>
            <person name="McClarty G."/>
            <person name="Salzberg S.L."/>
            <person name="Eisen J.A."/>
            <person name="Fraser C.M."/>
        </authorList>
    </citation>
    <scope>NUCLEOTIDE SEQUENCE [LARGE SCALE GENOMIC DNA]</scope>
    <source>
        <strain>AR39</strain>
    </source>
</reference>
<reference key="3">
    <citation type="journal article" date="2000" name="Nucleic Acids Res.">
        <title>Comparison of whole genome sequences of Chlamydia pneumoniae J138 from Japan and CWL029 from USA.</title>
        <authorList>
            <person name="Shirai M."/>
            <person name="Hirakawa H."/>
            <person name="Kimoto M."/>
            <person name="Tabuchi M."/>
            <person name="Kishi F."/>
            <person name="Ouchi K."/>
            <person name="Shiba T."/>
            <person name="Ishii K."/>
            <person name="Hattori M."/>
            <person name="Kuhara S."/>
            <person name="Nakazawa T."/>
        </authorList>
    </citation>
    <scope>NUCLEOTIDE SEQUENCE [LARGE SCALE GENOMIC DNA]</scope>
    <source>
        <strain>J138</strain>
    </source>
</reference>
<reference key="4">
    <citation type="submission" date="2002-05" db="EMBL/GenBank/DDBJ databases">
        <title>The genome sequence of Chlamydia pneumoniae TW183 and comparison with other Chlamydia strains based on whole genome sequence analysis.</title>
        <authorList>
            <person name="Geng M.M."/>
            <person name="Schuhmacher A."/>
            <person name="Muehldorfer I."/>
            <person name="Bensch K.W."/>
            <person name="Schaefer K.P."/>
            <person name="Schneider S."/>
            <person name="Pohl T."/>
            <person name="Essig A."/>
            <person name="Marre R."/>
            <person name="Melchers K."/>
        </authorList>
    </citation>
    <scope>NUCLEOTIDE SEQUENCE [LARGE SCALE GENOMIC DNA]</scope>
    <source>
        <strain>TW-183</strain>
    </source>
</reference>